<feature type="chain" id="PRO_0000123848" description="Aspartate aminotransferase">
    <location>
        <begin position="1"/>
        <end position="410"/>
    </location>
</feature>
<feature type="binding site" evidence="1">
    <location>
        <position position="47"/>
    </location>
    <ligand>
        <name>L-aspartate</name>
        <dbReference type="ChEBI" id="CHEBI:29991"/>
    </ligand>
</feature>
<feature type="binding site" evidence="3">
    <location>
        <position position="135"/>
    </location>
    <ligand>
        <name>L-aspartate</name>
        <dbReference type="ChEBI" id="CHEBI:29991"/>
    </ligand>
</feature>
<feature type="binding site" evidence="3">
    <location>
        <position position="185"/>
    </location>
    <ligand>
        <name>L-aspartate</name>
        <dbReference type="ChEBI" id="CHEBI:29991"/>
    </ligand>
</feature>
<feature type="binding site" evidence="3">
    <location>
        <position position="385"/>
    </location>
    <ligand>
        <name>L-aspartate</name>
        <dbReference type="ChEBI" id="CHEBI:29991"/>
    </ligand>
</feature>
<feature type="modified residue" description="N6-(pyridoxal phosphate)lysine" evidence="5">
    <location>
        <position position="249"/>
    </location>
</feature>
<feature type="helix" evidence="9">
    <location>
        <begin position="16"/>
        <end position="18"/>
    </location>
</feature>
<feature type="helix" evidence="9">
    <location>
        <begin position="25"/>
        <end position="38"/>
    </location>
</feature>
<feature type="helix" evidence="9">
    <location>
        <begin position="57"/>
        <end position="69"/>
    </location>
</feature>
<feature type="helix" evidence="9">
    <location>
        <begin position="81"/>
        <end position="95"/>
    </location>
</feature>
<feature type="helix" evidence="9">
    <location>
        <begin position="101"/>
        <end position="103"/>
    </location>
</feature>
<feature type="strand" evidence="9">
    <location>
        <begin position="104"/>
        <end position="108"/>
    </location>
</feature>
<feature type="helix" evidence="9">
    <location>
        <begin position="109"/>
        <end position="121"/>
    </location>
</feature>
<feature type="strand" evidence="9">
    <location>
        <begin position="127"/>
        <end position="133"/>
    </location>
</feature>
<feature type="helix" evidence="9">
    <location>
        <begin position="137"/>
        <end position="144"/>
    </location>
</feature>
<feature type="strand" evidence="9">
    <location>
        <begin position="148"/>
        <end position="153"/>
    </location>
</feature>
<feature type="helix" evidence="9">
    <location>
        <begin position="156"/>
        <end position="158"/>
    </location>
</feature>
<feature type="helix" evidence="9">
    <location>
        <begin position="164"/>
        <end position="170"/>
    </location>
</feature>
<feature type="strand" evidence="9">
    <location>
        <begin position="175"/>
        <end position="183"/>
    </location>
</feature>
<feature type="turn" evidence="9">
    <location>
        <begin position="185"/>
        <end position="187"/>
    </location>
</feature>
<feature type="helix" evidence="9">
    <location>
        <begin position="193"/>
        <end position="204"/>
    </location>
</feature>
<feature type="strand" evidence="9">
    <location>
        <begin position="210"/>
        <end position="214"/>
    </location>
</feature>
<feature type="turn" evidence="9">
    <location>
        <begin position="216"/>
        <end position="219"/>
    </location>
</feature>
<feature type="helix" evidence="9">
    <location>
        <begin position="230"/>
        <end position="233"/>
    </location>
</feature>
<feature type="helix" evidence="9">
    <location>
        <begin position="235"/>
        <end position="240"/>
    </location>
</feature>
<feature type="strand" evidence="9">
    <location>
        <begin position="241"/>
        <end position="247"/>
    </location>
</feature>
<feature type="turn" evidence="9">
    <location>
        <begin position="248"/>
        <end position="252"/>
    </location>
</feature>
<feature type="helix" evidence="9">
    <location>
        <begin position="254"/>
        <end position="256"/>
    </location>
</feature>
<feature type="strand" evidence="9">
    <location>
        <begin position="259"/>
        <end position="262"/>
    </location>
</feature>
<feature type="helix" evidence="9">
    <location>
        <begin position="265"/>
        <end position="278"/>
    </location>
</feature>
<feature type="helix" evidence="9">
    <location>
        <begin position="284"/>
        <end position="295"/>
    </location>
</feature>
<feature type="helix" evidence="9">
    <location>
        <begin position="300"/>
        <end position="319"/>
    </location>
</feature>
<feature type="strand" evidence="9">
    <location>
        <begin position="335"/>
        <end position="339"/>
    </location>
</feature>
<feature type="helix" evidence="9">
    <location>
        <begin position="341"/>
        <end position="343"/>
    </location>
</feature>
<feature type="helix" evidence="9">
    <location>
        <begin position="357"/>
        <end position="368"/>
    </location>
</feature>
<feature type="helix" evidence="9">
    <location>
        <begin position="375"/>
        <end position="378"/>
    </location>
</feature>
<feature type="strand" evidence="9">
    <location>
        <begin position="381"/>
        <end position="387"/>
    </location>
</feature>
<feature type="helix" evidence="9">
    <location>
        <begin position="392"/>
        <end position="407"/>
    </location>
</feature>
<proteinExistence type="evidence at protein level"/>
<organism>
    <name type="scientific">Rhizobium meliloti (strain 1021)</name>
    <name type="common">Ensifer meliloti</name>
    <name type="synonym">Sinorhizobium meliloti</name>
    <dbReference type="NCBI Taxonomy" id="266834"/>
    <lineage>
        <taxon>Bacteria</taxon>
        <taxon>Pseudomonadati</taxon>
        <taxon>Pseudomonadota</taxon>
        <taxon>Alphaproteobacteria</taxon>
        <taxon>Hyphomicrobiales</taxon>
        <taxon>Rhizobiaceae</taxon>
        <taxon>Sinorhizobium/Ensifer group</taxon>
        <taxon>Sinorhizobium</taxon>
    </lineage>
</organism>
<name>AAT_RHIME</name>
<comment type="function">
    <text evidence="2 4">Catalyzes the reversible conversion of aspartate and 2-oxoglutarate to glutamate and oxaloacetate (By similarity). Genetic evidence shows that this protein is involved in L-lysine catabolism. It may have 2-aminoadipate:2-oxoglutarate aminotransferase activity (PubMed:29769716).</text>
</comment>
<comment type="catalytic activity">
    <reaction evidence="2">
        <text>L-aspartate + 2-oxoglutarate = oxaloacetate + L-glutamate</text>
        <dbReference type="Rhea" id="RHEA:21824"/>
        <dbReference type="ChEBI" id="CHEBI:16452"/>
        <dbReference type="ChEBI" id="CHEBI:16810"/>
        <dbReference type="ChEBI" id="CHEBI:29985"/>
        <dbReference type="ChEBI" id="CHEBI:29991"/>
        <dbReference type="EC" id="2.6.1.1"/>
    </reaction>
</comment>
<comment type="catalytic activity">
    <reaction evidence="7">
        <text>L-2-aminoadipate + 2-oxoglutarate = 2-oxoadipate + L-glutamate</text>
        <dbReference type="Rhea" id="RHEA:12601"/>
        <dbReference type="ChEBI" id="CHEBI:16810"/>
        <dbReference type="ChEBI" id="CHEBI:29985"/>
        <dbReference type="ChEBI" id="CHEBI:57499"/>
        <dbReference type="ChEBI" id="CHEBI:58672"/>
        <dbReference type="EC" id="2.6.1.39"/>
    </reaction>
</comment>
<comment type="cofactor">
    <cofactor evidence="5">
        <name>pyridoxal 5'-phosphate</name>
        <dbReference type="ChEBI" id="CHEBI:597326"/>
    </cofactor>
</comment>
<comment type="subunit">
    <text evidence="5">Homodimer.</text>
</comment>
<comment type="subcellular location">
    <subcellularLocation>
        <location evidence="6">Cytoplasm</location>
    </subcellularLocation>
</comment>
<comment type="similarity">
    <text evidence="6">Belongs to the class-I pyridoxal-phosphate-dependent aminotransferase family.</text>
</comment>
<keyword id="KW-0002">3D-structure</keyword>
<keyword id="KW-0032">Aminotransferase</keyword>
<keyword id="KW-0963">Cytoplasm</keyword>
<keyword id="KW-0663">Pyridoxal phosphate</keyword>
<keyword id="KW-1185">Reference proteome</keyword>
<keyword id="KW-0808">Transferase</keyword>
<accession>P58350</accession>
<dbReference type="EC" id="2.6.1.1" evidence="2"/>
<dbReference type="EC" id="2.6.1.39" evidence="7"/>
<dbReference type="EMBL" id="AF448466">
    <property type="protein sequence ID" value="AAL41013.1"/>
    <property type="molecule type" value="Genomic_DNA"/>
</dbReference>
<dbReference type="EMBL" id="AL591688">
    <property type="protein sequence ID" value="CAC47870.1"/>
    <property type="molecule type" value="Genomic_DNA"/>
</dbReference>
<dbReference type="RefSeq" id="NP_387397.1">
    <property type="nucleotide sequence ID" value="NC_003047.1"/>
</dbReference>
<dbReference type="RefSeq" id="WP_010970548.1">
    <property type="nucleotide sequence ID" value="NC_003047.1"/>
</dbReference>
<dbReference type="PDB" id="6F35">
    <property type="method" value="X-ray"/>
    <property type="resolution" value="1.90 A"/>
    <property type="chains" value="A/B=1-410"/>
</dbReference>
<dbReference type="PDBsum" id="6F35"/>
<dbReference type="SMR" id="P58350"/>
<dbReference type="EnsemblBacteria" id="CAC47870">
    <property type="protein sequence ID" value="CAC47870"/>
    <property type="gene ID" value="SMc04386"/>
</dbReference>
<dbReference type="KEGG" id="sme:SMc04386"/>
<dbReference type="PATRIC" id="fig|266834.11.peg.4851"/>
<dbReference type="eggNOG" id="COG0436">
    <property type="taxonomic scope" value="Bacteria"/>
</dbReference>
<dbReference type="HOGENOM" id="CLU_017584_4_3_5"/>
<dbReference type="OrthoDB" id="9763453at2"/>
<dbReference type="Proteomes" id="UP000001976">
    <property type="component" value="Chromosome"/>
</dbReference>
<dbReference type="GO" id="GO:0005737">
    <property type="term" value="C:cytoplasm"/>
    <property type="evidence" value="ECO:0007669"/>
    <property type="project" value="UniProtKB-SubCell"/>
</dbReference>
<dbReference type="GO" id="GO:0047536">
    <property type="term" value="F:2-aminoadipate transaminase activity"/>
    <property type="evidence" value="ECO:0007669"/>
    <property type="project" value="UniProtKB-EC"/>
</dbReference>
<dbReference type="GO" id="GO:0004069">
    <property type="term" value="F:L-aspartate:2-oxoglutarate aminotransferase activity"/>
    <property type="evidence" value="ECO:0007669"/>
    <property type="project" value="UniProtKB-EC"/>
</dbReference>
<dbReference type="GO" id="GO:0030170">
    <property type="term" value="F:pyridoxal phosphate binding"/>
    <property type="evidence" value="ECO:0007669"/>
    <property type="project" value="InterPro"/>
</dbReference>
<dbReference type="GO" id="GO:0006520">
    <property type="term" value="P:amino acid metabolic process"/>
    <property type="evidence" value="ECO:0007669"/>
    <property type="project" value="InterPro"/>
</dbReference>
<dbReference type="GO" id="GO:0009058">
    <property type="term" value="P:biosynthetic process"/>
    <property type="evidence" value="ECO:0007669"/>
    <property type="project" value="InterPro"/>
</dbReference>
<dbReference type="CDD" id="cd00609">
    <property type="entry name" value="AAT_like"/>
    <property type="match status" value="1"/>
</dbReference>
<dbReference type="FunFam" id="3.40.640.10:FF:000033">
    <property type="entry name" value="Aspartate aminotransferase"/>
    <property type="match status" value="1"/>
</dbReference>
<dbReference type="Gene3D" id="3.90.1150.10">
    <property type="entry name" value="Aspartate Aminotransferase, domain 1"/>
    <property type="match status" value="1"/>
</dbReference>
<dbReference type="Gene3D" id="3.40.640.10">
    <property type="entry name" value="Type I PLP-dependent aspartate aminotransferase-like (Major domain)"/>
    <property type="match status" value="1"/>
</dbReference>
<dbReference type="InterPro" id="IPR004839">
    <property type="entry name" value="Aminotransferase_I/II_large"/>
</dbReference>
<dbReference type="InterPro" id="IPR050596">
    <property type="entry name" value="AspAT/PAT-like"/>
</dbReference>
<dbReference type="InterPro" id="IPR004838">
    <property type="entry name" value="NHTrfase_class1_PyrdxlP-BS"/>
</dbReference>
<dbReference type="InterPro" id="IPR015424">
    <property type="entry name" value="PyrdxlP-dep_Trfase"/>
</dbReference>
<dbReference type="InterPro" id="IPR015421">
    <property type="entry name" value="PyrdxlP-dep_Trfase_major"/>
</dbReference>
<dbReference type="InterPro" id="IPR015422">
    <property type="entry name" value="PyrdxlP-dep_Trfase_small"/>
</dbReference>
<dbReference type="PANTHER" id="PTHR46383">
    <property type="entry name" value="ASPARTATE AMINOTRANSFERASE"/>
    <property type="match status" value="1"/>
</dbReference>
<dbReference type="PANTHER" id="PTHR46383:SF1">
    <property type="entry name" value="ASPARTATE AMINOTRANSFERASE"/>
    <property type="match status" value="1"/>
</dbReference>
<dbReference type="Pfam" id="PF00155">
    <property type="entry name" value="Aminotran_1_2"/>
    <property type="match status" value="1"/>
</dbReference>
<dbReference type="SUPFAM" id="SSF53383">
    <property type="entry name" value="PLP-dependent transferases"/>
    <property type="match status" value="1"/>
</dbReference>
<dbReference type="PROSITE" id="PS00105">
    <property type="entry name" value="AA_TRANSFER_CLASS_1"/>
    <property type="match status" value="1"/>
</dbReference>
<evidence type="ECO:0000250" key="1">
    <source>
        <dbReference type="UniProtKB" id="P00509"/>
    </source>
</evidence>
<evidence type="ECO:0000250" key="2">
    <source>
        <dbReference type="UniProtKB" id="Q06191"/>
    </source>
</evidence>
<evidence type="ECO:0000250" key="3">
    <source>
        <dbReference type="UniProtKB" id="Q56232"/>
    </source>
</evidence>
<evidence type="ECO:0000269" key="4">
    <source>
    </source>
</evidence>
<evidence type="ECO:0000269" key="5">
    <source>
    </source>
</evidence>
<evidence type="ECO:0000305" key="6"/>
<evidence type="ECO:0000305" key="7">
    <source>
    </source>
</evidence>
<evidence type="ECO:0007744" key="8">
    <source>
        <dbReference type="PDB" id="6F35"/>
    </source>
</evidence>
<evidence type="ECO:0007829" key="9">
    <source>
        <dbReference type="PDB" id="6F35"/>
    </source>
</evidence>
<gene>
    <name type="primary">aatB</name>
    <name type="ordered locus">R03291</name>
    <name type="ORF">SMc04386</name>
</gene>
<protein>
    <recommendedName>
        <fullName evidence="2">Aspartate aminotransferase</fullName>
        <shortName evidence="2">AAT</shortName>
        <shortName evidence="2">AspAT</shortName>
        <ecNumber evidence="2">2.6.1.1</ecNumber>
    </recommendedName>
    <alternativeName>
        <fullName evidence="7">Putative 2-aminoadipate transaminase</fullName>
        <ecNumber evidence="7">2.6.1.39</ecNumber>
    </alternativeName>
    <alternativeName>
        <fullName evidence="6">Transaminase A</fullName>
    </alternativeName>
</protein>
<sequence>MTINATVKEAGFQPASRISSIGVSEILKIGARAAAMKREGKPVIILGAGEPDFDTPEHVKQAASDAIHRGETKYTALDGTPELKKAIREKFQRENGLAYELDEITVATGAKQILFNAMMASLDPGDEVIIPTPYWTSYSDIVHICEGKPVLIACDASSGFRLTAEKLEAAITPRTRWVLLNSPSNPSGAAYSAADYRPLLEVLLRHPHVWLLVDDMYEHIVYDGFRFVTPAQLEPGLKNRTLTVNGVSKAYAMTGWRIGYAGGPRELIKAMAVVQSQATSCPSSISQAASVAALNGPQDFLKERTESFQRRRDLVVNGLNAIDGLDCRVPEGAFYTFSGCAGVLGKVTPSGKRIKTDTDFCAYLLEDAHVAVVPGSAFGLSPFFRISYATSEAELKEALERIAAACDRLS</sequence>
<reference key="1">
    <citation type="journal article" date="2001" name="Science">
        <title>The composite genome of the legume symbiont Sinorhizobium meliloti.</title>
        <authorList>
            <person name="Galibert F."/>
            <person name="Finan T.M."/>
            <person name="Long S.R."/>
            <person name="Puehler A."/>
            <person name="Abola P."/>
            <person name="Ampe F."/>
            <person name="Barloy-Hubler F."/>
            <person name="Barnett M.J."/>
            <person name="Becker A."/>
            <person name="Boistard P."/>
            <person name="Bothe G."/>
            <person name="Boutry M."/>
            <person name="Bowser L."/>
            <person name="Buhrmester J."/>
            <person name="Cadieu E."/>
            <person name="Capela D."/>
            <person name="Chain P."/>
            <person name="Cowie A."/>
            <person name="Davis R.W."/>
            <person name="Dreano S."/>
            <person name="Federspiel N.A."/>
            <person name="Fisher R.F."/>
            <person name="Gloux S."/>
            <person name="Godrie T."/>
            <person name="Goffeau A."/>
            <person name="Golding B."/>
            <person name="Gouzy J."/>
            <person name="Gurjal M."/>
            <person name="Hernandez-Lucas I."/>
            <person name="Hong A."/>
            <person name="Huizar L."/>
            <person name="Hyman R.W."/>
            <person name="Jones T."/>
            <person name="Kahn D."/>
            <person name="Kahn M.L."/>
            <person name="Kalman S."/>
            <person name="Keating D.H."/>
            <person name="Kiss E."/>
            <person name="Komp C."/>
            <person name="Lelaure V."/>
            <person name="Masuy D."/>
            <person name="Palm C."/>
            <person name="Peck M.C."/>
            <person name="Pohl T.M."/>
            <person name="Portetelle D."/>
            <person name="Purnelle B."/>
            <person name="Ramsperger U."/>
            <person name="Surzycki R."/>
            <person name="Thebault P."/>
            <person name="Vandenbol M."/>
            <person name="Vorhoelter F.J."/>
            <person name="Weidner S."/>
            <person name="Wells D.H."/>
            <person name="Wong K."/>
            <person name="Yeh K.-C."/>
            <person name="Batut J."/>
        </authorList>
    </citation>
    <scope>NUCLEOTIDE SEQUENCE [LARGE SCALE GENOMIC DNA]</scope>
    <source>
        <strain>1021</strain>
    </source>
</reference>
<reference key="2">
    <citation type="submission" date="2001-11" db="EMBL/GenBank/DDBJ databases">
        <title>Sinorhizobium meliloti aatB gene region.</title>
        <authorList>
            <person name="Watson R.J."/>
            <person name="Heys R."/>
        </authorList>
    </citation>
    <scope>NUCLEOTIDE SEQUENCE [GENOMIC DNA]</scope>
    <source>
        <strain>JJ1c10</strain>
    </source>
</reference>
<reference key="3">
    <citation type="journal article" date="2001" name="Proc. Natl. Acad. Sci. U.S.A.">
        <title>Analysis of the chromosome sequence of the legume symbiont Sinorhizobium meliloti strain 1021.</title>
        <authorList>
            <person name="Capela D."/>
            <person name="Barloy-Hubler F."/>
            <person name="Gouzy J."/>
            <person name="Bothe G."/>
            <person name="Ampe F."/>
            <person name="Batut J."/>
            <person name="Boistard P."/>
            <person name="Becker A."/>
            <person name="Boutry M."/>
            <person name="Cadieu E."/>
            <person name="Dreano S."/>
            <person name="Gloux S."/>
            <person name="Godrie T."/>
            <person name="Goffeau A."/>
            <person name="Kahn D."/>
            <person name="Kiss E."/>
            <person name="Lelaure V."/>
            <person name="Masuy D."/>
            <person name="Pohl T."/>
            <person name="Portetelle D."/>
            <person name="Puehler A."/>
            <person name="Purnelle B."/>
            <person name="Ramsperger U."/>
            <person name="Renard C."/>
            <person name="Thebault P."/>
            <person name="Vandenbol M."/>
            <person name="Weidner S."/>
            <person name="Galibert F."/>
        </authorList>
    </citation>
    <scope>NUCLEOTIDE SEQUENCE [LARGE SCALE GENOMIC DNA]</scope>
    <source>
        <strain>1021</strain>
    </source>
</reference>
<reference key="4">
    <citation type="journal article" date="2018" name="Nature">
        <title>Mutant phenotypes for thousands of bacterial genes of unknown function.</title>
        <authorList>
            <person name="Price M.N."/>
            <person name="Wetmore K.M."/>
            <person name="Waters R.J."/>
            <person name="Callaghan M."/>
            <person name="Ray J."/>
            <person name="Liu H."/>
            <person name="Kuehl J.V."/>
            <person name="Melnyk R.A."/>
            <person name="Lamson J.S."/>
            <person name="Suh Y."/>
            <person name="Carlson H.K."/>
            <person name="Esquivel Z."/>
            <person name="Sadeeshkumar H."/>
            <person name="Chakraborty R."/>
            <person name="Zane G.M."/>
            <person name="Rubin B.E."/>
            <person name="Wall J.D."/>
            <person name="Visel A."/>
            <person name="Bristow J."/>
            <person name="Blow M.J."/>
            <person name="Arkin A.P."/>
            <person name="Deutschbauer A.M."/>
        </authorList>
    </citation>
    <scope>FUNCTION [LARGE SCALE ANALYSIS]</scope>
    <scope>CATALYTIC ACTIVITY</scope>
</reference>
<reference evidence="8" key="5">
    <citation type="journal article" date="2019" name="FEBS J.">
        <title>Tyrosine metabolism: identification of a key residue in the acquisition of prephenate aminotransferase activity by 1beta aspartate aminotransferase.</title>
        <authorList>
            <person name="Giustini C."/>
            <person name="Graindorge M."/>
            <person name="Cobessi D."/>
            <person name="Crouzy S."/>
            <person name="Robin A."/>
            <person name="Curien G."/>
            <person name="Matringe M."/>
        </authorList>
    </citation>
    <scope>X-RAY CRYSTALLOGRAPHY (1.90 ANGSTROMS) IN COMPLEX WITH PYRIDOXAL PHOSPHATE</scope>
    <scope>COFACTOR</scope>
    <scope>SUBUNIT</scope>
</reference>